<protein>
    <recommendedName>
        <fullName evidence="1">Thymidylate kinase</fullName>
        <ecNumber evidence="1">2.7.4.9</ecNumber>
    </recommendedName>
    <alternativeName>
        <fullName evidence="1">dTMP kinase</fullName>
    </alternativeName>
</protein>
<dbReference type="EC" id="2.7.4.9" evidence="1"/>
<dbReference type="EMBL" id="AE017221">
    <property type="protein sequence ID" value="AAS81585.1"/>
    <property type="molecule type" value="Genomic_DNA"/>
</dbReference>
<dbReference type="RefSeq" id="WP_011173647.1">
    <property type="nucleotide sequence ID" value="NC_005835.1"/>
</dbReference>
<dbReference type="SMR" id="Q72I89"/>
<dbReference type="GeneID" id="3169786"/>
<dbReference type="KEGG" id="tth:TT_C1243"/>
<dbReference type="eggNOG" id="COG0125">
    <property type="taxonomic scope" value="Bacteria"/>
</dbReference>
<dbReference type="HOGENOM" id="CLU_049131_0_2_0"/>
<dbReference type="OrthoDB" id="9774907at2"/>
<dbReference type="Proteomes" id="UP000000592">
    <property type="component" value="Chromosome"/>
</dbReference>
<dbReference type="GO" id="GO:0005829">
    <property type="term" value="C:cytosol"/>
    <property type="evidence" value="ECO:0007669"/>
    <property type="project" value="TreeGrafter"/>
</dbReference>
<dbReference type="GO" id="GO:0005524">
    <property type="term" value="F:ATP binding"/>
    <property type="evidence" value="ECO:0007669"/>
    <property type="project" value="UniProtKB-UniRule"/>
</dbReference>
<dbReference type="GO" id="GO:0004798">
    <property type="term" value="F:dTMP kinase activity"/>
    <property type="evidence" value="ECO:0007669"/>
    <property type="project" value="UniProtKB-UniRule"/>
</dbReference>
<dbReference type="GO" id="GO:0006233">
    <property type="term" value="P:dTDP biosynthetic process"/>
    <property type="evidence" value="ECO:0007669"/>
    <property type="project" value="InterPro"/>
</dbReference>
<dbReference type="GO" id="GO:0006235">
    <property type="term" value="P:dTTP biosynthetic process"/>
    <property type="evidence" value="ECO:0007669"/>
    <property type="project" value="UniProtKB-UniRule"/>
</dbReference>
<dbReference type="GO" id="GO:0006227">
    <property type="term" value="P:dUDP biosynthetic process"/>
    <property type="evidence" value="ECO:0007669"/>
    <property type="project" value="TreeGrafter"/>
</dbReference>
<dbReference type="CDD" id="cd01672">
    <property type="entry name" value="TMPK"/>
    <property type="match status" value="1"/>
</dbReference>
<dbReference type="FunFam" id="3.40.50.300:FF:000225">
    <property type="entry name" value="Thymidylate kinase"/>
    <property type="match status" value="1"/>
</dbReference>
<dbReference type="Gene3D" id="3.40.50.300">
    <property type="entry name" value="P-loop containing nucleotide triphosphate hydrolases"/>
    <property type="match status" value="1"/>
</dbReference>
<dbReference type="HAMAP" id="MF_00165">
    <property type="entry name" value="Thymidylate_kinase"/>
    <property type="match status" value="1"/>
</dbReference>
<dbReference type="InterPro" id="IPR027417">
    <property type="entry name" value="P-loop_NTPase"/>
</dbReference>
<dbReference type="InterPro" id="IPR039430">
    <property type="entry name" value="Thymidylate_kin-like_dom"/>
</dbReference>
<dbReference type="InterPro" id="IPR018095">
    <property type="entry name" value="Thymidylate_kin_CS"/>
</dbReference>
<dbReference type="InterPro" id="IPR018094">
    <property type="entry name" value="Thymidylate_kinase"/>
</dbReference>
<dbReference type="NCBIfam" id="TIGR00041">
    <property type="entry name" value="DTMP_kinase"/>
    <property type="match status" value="1"/>
</dbReference>
<dbReference type="PANTHER" id="PTHR10344">
    <property type="entry name" value="THYMIDYLATE KINASE"/>
    <property type="match status" value="1"/>
</dbReference>
<dbReference type="PANTHER" id="PTHR10344:SF4">
    <property type="entry name" value="UMP-CMP KINASE 2, MITOCHONDRIAL"/>
    <property type="match status" value="1"/>
</dbReference>
<dbReference type="Pfam" id="PF02223">
    <property type="entry name" value="Thymidylate_kin"/>
    <property type="match status" value="1"/>
</dbReference>
<dbReference type="SUPFAM" id="SSF52540">
    <property type="entry name" value="P-loop containing nucleoside triphosphate hydrolases"/>
    <property type="match status" value="1"/>
</dbReference>
<dbReference type="PROSITE" id="PS01331">
    <property type="entry name" value="THYMIDYLATE_KINASE"/>
    <property type="match status" value="1"/>
</dbReference>
<proteinExistence type="inferred from homology"/>
<name>KTHY_THET2</name>
<organism>
    <name type="scientific">Thermus thermophilus (strain ATCC BAA-163 / DSM 7039 / HB27)</name>
    <dbReference type="NCBI Taxonomy" id="262724"/>
    <lineage>
        <taxon>Bacteria</taxon>
        <taxon>Thermotogati</taxon>
        <taxon>Deinococcota</taxon>
        <taxon>Deinococci</taxon>
        <taxon>Thermales</taxon>
        <taxon>Thermaceae</taxon>
        <taxon>Thermus</taxon>
    </lineage>
</organism>
<reference key="1">
    <citation type="journal article" date="2004" name="Nat. Biotechnol.">
        <title>The genome sequence of the extreme thermophile Thermus thermophilus.</title>
        <authorList>
            <person name="Henne A."/>
            <person name="Brueggemann H."/>
            <person name="Raasch C."/>
            <person name="Wiezer A."/>
            <person name="Hartsch T."/>
            <person name="Liesegang H."/>
            <person name="Johann A."/>
            <person name="Lienard T."/>
            <person name="Gohl O."/>
            <person name="Martinez-Arias R."/>
            <person name="Jacobi C."/>
            <person name="Starkuviene V."/>
            <person name="Schlenczeck S."/>
            <person name="Dencker S."/>
            <person name="Huber R."/>
            <person name="Klenk H.-P."/>
            <person name="Kramer W."/>
            <person name="Merkl R."/>
            <person name="Gottschalk G."/>
            <person name="Fritz H.-J."/>
        </authorList>
    </citation>
    <scope>NUCLEOTIDE SEQUENCE [LARGE SCALE GENOMIC DNA]</scope>
    <source>
        <strain>ATCC BAA-163 / DSM 7039 / HB27</strain>
    </source>
</reference>
<accession>Q72I89</accession>
<comment type="function">
    <text evidence="1">Phosphorylation of dTMP to form dTDP in both de novo and salvage pathways of dTTP synthesis.</text>
</comment>
<comment type="catalytic activity">
    <reaction evidence="1">
        <text>dTMP + ATP = dTDP + ADP</text>
        <dbReference type="Rhea" id="RHEA:13517"/>
        <dbReference type="ChEBI" id="CHEBI:30616"/>
        <dbReference type="ChEBI" id="CHEBI:58369"/>
        <dbReference type="ChEBI" id="CHEBI:63528"/>
        <dbReference type="ChEBI" id="CHEBI:456216"/>
        <dbReference type="EC" id="2.7.4.9"/>
    </reaction>
</comment>
<comment type="similarity">
    <text evidence="1">Belongs to the thymidylate kinase family.</text>
</comment>
<gene>
    <name evidence="1" type="primary">tmk</name>
    <name type="ordered locus">TT_C1243</name>
</gene>
<keyword id="KW-0067">ATP-binding</keyword>
<keyword id="KW-0418">Kinase</keyword>
<keyword id="KW-0545">Nucleotide biosynthesis</keyword>
<keyword id="KW-0547">Nucleotide-binding</keyword>
<keyword id="KW-0808">Transferase</keyword>
<evidence type="ECO:0000255" key="1">
    <source>
        <dbReference type="HAMAP-Rule" id="MF_00165"/>
    </source>
</evidence>
<feature type="chain" id="PRO_0000155360" description="Thymidylate kinase">
    <location>
        <begin position="1"/>
        <end position="198"/>
    </location>
</feature>
<feature type="binding site" evidence="1">
    <location>
        <begin position="10"/>
        <end position="17"/>
    </location>
    <ligand>
        <name>ATP</name>
        <dbReference type="ChEBI" id="CHEBI:30616"/>
    </ligand>
</feature>
<sequence>MPGLFLTLEGLDGSGKTTQARRLAAFLEAQGRPVLLTREPGGGLPEVRSLLLTQELSPEAEYLLFSADRAEHVRKVILPGLAAGKVVISDRYLDSSLAYQGYGRGLPLPWLREVAREATRGLKPRLTFLLDLPPEAALRRVRRPDRLEGLGLEFFRRVREGYLALARAEPGRFVVLDATLPEEEIARAIQAHLRPLLP</sequence>